<comment type="function">
    <text evidence="1">Catalyzes the synthesis of GMP from XMP.</text>
</comment>
<comment type="catalytic activity">
    <reaction evidence="1">
        <text>XMP + L-glutamine + ATP + H2O = GMP + L-glutamate + AMP + diphosphate + 2 H(+)</text>
        <dbReference type="Rhea" id="RHEA:11680"/>
        <dbReference type="ChEBI" id="CHEBI:15377"/>
        <dbReference type="ChEBI" id="CHEBI:15378"/>
        <dbReference type="ChEBI" id="CHEBI:29985"/>
        <dbReference type="ChEBI" id="CHEBI:30616"/>
        <dbReference type="ChEBI" id="CHEBI:33019"/>
        <dbReference type="ChEBI" id="CHEBI:57464"/>
        <dbReference type="ChEBI" id="CHEBI:58115"/>
        <dbReference type="ChEBI" id="CHEBI:58359"/>
        <dbReference type="ChEBI" id="CHEBI:456215"/>
        <dbReference type="EC" id="6.3.5.2"/>
    </reaction>
</comment>
<comment type="pathway">
    <text evidence="1">Purine metabolism; GMP biosynthesis; GMP from XMP (L-Gln route): step 1/1.</text>
</comment>
<comment type="subunit">
    <text evidence="1">Homodimer.</text>
</comment>
<organism>
    <name type="scientific">Lactiplantibacillus plantarum (strain ATCC BAA-793 / NCIMB 8826 / WCFS1)</name>
    <name type="common">Lactobacillus plantarum</name>
    <dbReference type="NCBI Taxonomy" id="220668"/>
    <lineage>
        <taxon>Bacteria</taxon>
        <taxon>Bacillati</taxon>
        <taxon>Bacillota</taxon>
        <taxon>Bacilli</taxon>
        <taxon>Lactobacillales</taxon>
        <taxon>Lactobacillaceae</taxon>
        <taxon>Lactiplantibacillus</taxon>
    </lineage>
</organism>
<feature type="chain" id="PRO_0000140138" description="GMP synthase [glutamine-hydrolyzing]">
    <location>
        <begin position="1"/>
        <end position="518"/>
    </location>
</feature>
<feature type="domain" description="Glutamine amidotransferase type-1" evidence="1">
    <location>
        <begin position="11"/>
        <end position="203"/>
    </location>
</feature>
<feature type="domain" description="GMPS ATP-PPase" evidence="1">
    <location>
        <begin position="204"/>
        <end position="393"/>
    </location>
</feature>
<feature type="active site" description="Nucleophile" evidence="1">
    <location>
        <position position="88"/>
    </location>
</feature>
<feature type="active site" evidence="1">
    <location>
        <position position="177"/>
    </location>
</feature>
<feature type="active site" evidence="1">
    <location>
        <position position="179"/>
    </location>
</feature>
<feature type="binding site" evidence="1">
    <location>
        <begin position="231"/>
        <end position="237"/>
    </location>
    <ligand>
        <name>ATP</name>
        <dbReference type="ChEBI" id="CHEBI:30616"/>
    </ligand>
</feature>
<accession>Q88Y74</accession>
<accession>F9UMB5</accession>
<protein>
    <recommendedName>
        <fullName evidence="1">GMP synthase [glutamine-hydrolyzing]</fullName>
        <ecNumber evidence="1">6.3.5.2</ecNumber>
    </recommendedName>
    <alternativeName>
        <fullName evidence="1">GMP synthetase</fullName>
    </alternativeName>
    <alternativeName>
        <fullName evidence="1">Glutamine amidotransferase</fullName>
    </alternativeName>
</protein>
<proteinExistence type="inferred from homology"/>
<reference key="1">
    <citation type="journal article" date="2003" name="Proc. Natl. Acad. Sci. U.S.A.">
        <title>Complete genome sequence of Lactobacillus plantarum WCFS1.</title>
        <authorList>
            <person name="Kleerebezem M."/>
            <person name="Boekhorst J."/>
            <person name="van Kranenburg R."/>
            <person name="Molenaar D."/>
            <person name="Kuipers O.P."/>
            <person name="Leer R."/>
            <person name="Tarchini R."/>
            <person name="Peters S.A."/>
            <person name="Sandbrink H.M."/>
            <person name="Fiers M.W.E.J."/>
            <person name="Stiekema W."/>
            <person name="Klein Lankhorst R.M."/>
            <person name="Bron P.A."/>
            <person name="Hoffer S.M."/>
            <person name="Nierop Groot M.N."/>
            <person name="Kerkhoven R."/>
            <person name="De Vries M."/>
            <person name="Ursing B."/>
            <person name="De Vos W.M."/>
            <person name="Siezen R.J."/>
        </authorList>
    </citation>
    <scope>NUCLEOTIDE SEQUENCE [LARGE SCALE GENOMIC DNA]</scope>
    <source>
        <strain>ATCC BAA-793 / NCIMB 8826 / WCFS1</strain>
    </source>
</reference>
<reference key="2">
    <citation type="journal article" date="2012" name="J. Bacteriol.">
        <title>Complete resequencing and reannotation of the Lactobacillus plantarum WCFS1 genome.</title>
        <authorList>
            <person name="Siezen R.J."/>
            <person name="Francke C."/>
            <person name="Renckens B."/>
            <person name="Boekhorst J."/>
            <person name="Wels M."/>
            <person name="Kleerebezem M."/>
            <person name="van Hijum S.A."/>
        </authorList>
    </citation>
    <scope>NUCLEOTIDE SEQUENCE [LARGE SCALE GENOMIC DNA]</scope>
    <scope>GENOME REANNOTATION</scope>
    <source>
        <strain>ATCC BAA-793 / NCIMB 8826 / WCFS1</strain>
    </source>
</reference>
<name>GUAA_LACPL</name>
<keyword id="KW-0067">ATP-binding</keyword>
<keyword id="KW-0315">Glutamine amidotransferase</keyword>
<keyword id="KW-0332">GMP biosynthesis</keyword>
<keyword id="KW-0436">Ligase</keyword>
<keyword id="KW-0547">Nucleotide-binding</keyword>
<keyword id="KW-0658">Purine biosynthesis</keyword>
<keyword id="KW-1185">Reference proteome</keyword>
<evidence type="ECO:0000255" key="1">
    <source>
        <dbReference type="HAMAP-Rule" id="MF_00344"/>
    </source>
</evidence>
<sequence length="518" mass="57457">MAKTDTASFDSILVLDFGSQYNQLITRRIRDFGVYSELLPNTITAEEIKARHPKGIIFSGGPNSVYDDGAFRVDPEIFKLGLPILGICYGMQLMTYTLAGGKVESADNREYGKANIDVTSDSATLFKDTPAEQSVWMSHGDLVTQAPDGFDVVATSKNCPIAAIQDVDRKLYGIQFHAEVRNTDYGNDILRHFAFDVCQAEANWSMDDFIDMQIEKIRAEVGDKKVLLGLSGGVDSSVVGVLLHKAIGTQLTSIFVDHGLLRKGEADQVMASLEGKFGLNIIKVDAKDRFLSKLAGVSDPERKRKIIGNEFIQVFDEEATKLNGMEFLAQGTLYTDVIESGTSTAQTIKSHHNVGGLPEDMQFKLIEPLRTLFKDEARELGEKLGMPSDLVWRQPFPGPGLGIRVIGEITEDKLEIVRDSDFILRDEIKKAGLDREIWQYFTVLPGIKSVGVMGDGRTYDYTVGIRAVTSIDGMTADFARIPWDVLQKISVRIVNEVDHVNRIVYDVTSKPPSTIEWE</sequence>
<gene>
    <name evidence="1" type="primary">guaA</name>
    <name type="ordered locus">lp_0914</name>
</gene>
<dbReference type="EC" id="6.3.5.2" evidence="1"/>
<dbReference type="EMBL" id="AL935263">
    <property type="protein sequence ID" value="CCC78354.1"/>
    <property type="molecule type" value="Genomic_DNA"/>
</dbReference>
<dbReference type="RefSeq" id="WP_003644035.1">
    <property type="nucleotide sequence ID" value="NC_004567.2"/>
</dbReference>
<dbReference type="RefSeq" id="YP_004888868.1">
    <property type="nucleotide sequence ID" value="NC_004567.2"/>
</dbReference>
<dbReference type="SMR" id="Q88Y74"/>
<dbReference type="STRING" id="220668.lp_0914"/>
<dbReference type="MEROPS" id="C26.957"/>
<dbReference type="EnsemblBacteria" id="CCC78354">
    <property type="protein sequence ID" value="CCC78354"/>
    <property type="gene ID" value="lp_0914"/>
</dbReference>
<dbReference type="GeneID" id="77217415"/>
<dbReference type="KEGG" id="lpl:lp_0914"/>
<dbReference type="PATRIC" id="fig|220668.9.peg.774"/>
<dbReference type="eggNOG" id="COG0518">
    <property type="taxonomic scope" value="Bacteria"/>
</dbReference>
<dbReference type="eggNOG" id="COG0519">
    <property type="taxonomic scope" value="Bacteria"/>
</dbReference>
<dbReference type="HOGENOM" id="CLU_014340_0_5_9"/>
<dbReference type="OrthoDB" id="9802219at2"/>
<dbReference type="PhylomeDB" id="Q88Y74"/>
<dbReference type="UniPathway" id="UPA00189">
    <property type="reaction ID" value="UER00296"/>
</dbReference>
<dbReference type="Proteomes" id="UP000000432">
    <property type="component" value="Chromosome"/>
</dbReference>
<dbReference type="GO" id="GO:0005829">
    <property type="term" value="C:cytosol"/>
    <property type="evidence" value="ECO:0007669"/>
    <property type="project" value="TreeGrafter"/>
</dbReference>
<dbReference type="GO" id="GO:0005524">
    <property type="term" value="F:ATP binding"/>
    <property type="evidence" value="ECO:0007669"/>
    <property type="project" value="UniProtKB-UniRule"/>
</dbReference>
<dbReference type="GO" id="GO:0003921">
    <property type="term" value="F:GMP synthase activity"/>
    <property type="evidence" value="ECO:0007669"/>
    <property type="project" value="InterPro"/>
</dbReference>
<dbReference type="CDD" id="cd01742">
    <property type="entry name" value="GATase1_GMP_Synthase"/>
    <property type="match status" value="1"/>
</dbReference>
<dbReference type="CDD" id="cd01997">
    <property type="entry name" value="GMP_synthase_C"/>
    <property type="match status" value="1"/>
</dbReference>
<dbReference type="FunFam" id="3.30.300.10:FF:000002">
    <property type="entry name" value="GMP synthase [glutamine-hydrolyzing]"/>
    <property type="match status" value="1"/>
</dbReference>
<dbReference type="FunFam" id="3.40.50.620:FF:000001">
    <property type="entry name" value="GMP synthase [glutamine-hydrolyzing]"/>
    <property type="match status" value="1"/>
</dbReference>
<dbReference type="FunFam" id="3.40.50.880:FF:000001">
    <property type="entry name" value="GMP synthase [glutamine-hydrolyzing]"/>
    <property type="match status" value="1"/>
</dbReference>
<dbReference type="Gene3D" id="3.30.300.10">
    <property type="match status" value="1"/>
</dbReference>
<dbReference type="Gene3D" id="3.40.50.880">
    <property type="match status" value="1"/>
</dbReference>
<dbReference type="Gene3D" id="3.40.50.620">
    <property type="entry name" value="HUPs"/>
    <property type="match status" value="1"/>
</dbReference>
<dbReference type="HAMAP" id="MF_00344">
    <property type="entry name" value="GMP_synthase"/>
    <property type="match status" value="1"/>
</dbReference>
<dbReference type="InterPro" id="IPR029062">
    <property type="entry name" value="Class_I_gatase-like"/>
</dbReference>
<dbReference type="InterPro" id="IPR017926">
    <property type="entry name" value="GATASE"/>
</dbReference>
<dbReference type="InterPro" id="IPR001674">
    <property type="entry name" value="GMP_synth_C"/>
</dbReference>
<dbReference type="InterPro" id="IPR004739">
    <property type="entry name" value="GMP_synth_GATase"/>
</dbReference>
<dbReference type="InterPro" id="IPR022955">
    <property type="entry name" value="GMP_synthase"/>
</dbReference>
<dbReference type="InterPro" id="IPR025777">
    <property type="entry name" value="GMPS_ATP_PPase_dom"/>
</dbReference>
<dbReference type="InterPro" id="IPR022310">
    <property type="entry name" value="NAD/GMP_synthase"/>
</dbReference>
<dbReference type="InterPro" id="IPR014729">
    <property type="entry name" value="Rossmann-like_a/b/a_fold"/>
</dbReference>
<dbReference type="NCBIfam" id="TIGR00884">
    <property type="entry name" value="guaA_Cterm"/>
    <property type="match status" value="1"/>
</dbReference>
<dbReference type="NCBIfam" id="TIGR00888">
    <property type="entry name" value="guaA_Nterm"/>
    <property type="match status" value="1"/>
</dbReference>
<dbReference type="NCBIfam" id="NF000848">
    <property type="entry name" value="PRK00074.1"/>
    <property type="match status" value="1"/>
</dbReference>
<dbReference type="PANTHER" id="PTHR11922:SF2">
    <property type="entry name" value="GMP SYNTHASE [GLUTAMINE-HYDROLYZING]"/>
    <property type="match status" value="1"/>
</dbReference>
<dbReference type="PANTHER" id="PTHR11922">
    <property type="entry name" value="GMP SYNTHASE-RELATED"/>
    <property type="match status" value="1"/>
</dbReference>
<dbReference type="Pfam" id="PF00117">
    <property type="entry name" value="GATase"/>
    <property type="match status" value="1"/>
</dbReference>
<dbReference type="Pfam" id="PF00958">
    <property type="entry name" value="GMP_synt_C"/>
    <property type="match status" value="1"/>
</dbReference>
<dbReference type="Pfam" id="PF02540">
    <property type="entry name" value="NAD_synthase"/>
    <property type="match status" value="1"/>
</dbReference>
<dbReference type="PRINTS" id="PR00099">
    <property type="entry name" value="CPSGATASE"/>
</dbReference>
<dbReference type="PRINTS" id="PR00096">
    <property type="entry name" value="GATASE"/>
</dbReference>
<dbReference type="SUPFAM" id="SSF52402">
    <property type="entry name" value="Adenine nucleotide alpha hydrolases-like"/>
    <property type="match status" value="1"/>
</dbReference>
<dbReference type="SUPFAM" id="SSF52317">
    <property type="entry name" value="Class I glutamine amidotransferase-like"/>
    <property type="match status" value="1"/>
</dbReference>
<dbReference type="SUPFAM" id="SSF54810">
    <property type="entry name" value="GMP synthetase C-terminal dimerisation domain"/>
    <property type="match status" value="1"/>
</dbReference>
<dbReference type="PROSITE" id="PS51273">
    <property type="entry name" value="GATASE_TYPE_1"/>
    <property type="match status" value="1"/>
</dbReference>
<dbReference type="PROSITE" id="PS51553">
    <property type="entry name" value="GMPS_ATP_PPASE"/>
    <property type="match status" value="1"/>
</dbReference>